<comment type="function">
    <text evidence="1 3">Plays a role in neuronal development and polarity, as well as in axon growth and guidance, neuronal growth cone collapse and cell migration. Necessary for signaling by class 3 semaphorins and subsequent remodeling of the cytoskeleton (By similarity).</text>
</comment>
<comment type="subunit">
    <text evidence="1">Homotetramer, and heterotetramer with CRMP1, DPYSL3, DPYSL4 or DPYSL5. Interacts through its C-terminus with the C-terminus of CYFIP1/SRA1 (By similarity).</text>
</comment>
<comment type="subcellular location">
    <subcellularLocation>
        <location evidence="3">Cytoplasm</location>
    </subcellularLocation>
</comment>
<comment type="tissue specificity">
    <text evidence="3">Detected in the developing chick nervous system.</text>
</comment>
<comment type="similarity">
    <text evidence="4">Belongs to the metallo-dependent hydrolases superfamily. Hydantoinase/dihydropyrimidinase family.</text>
</comment>
<comment type="caution">
    <text evidence="4">Lacks most of the conserved residues that are essential for binding the metal cofactor and hence for dihydropyrimidinase activity. Its enzyme activity is therefore unsure.</text>
</comment>
<sequence length="572" mass="62331">MSYQGKKNIPRITSDRLLIKGGKIVNDDQSFYADIYMEDGLIKQIGENLIVPGGVKTIEAHGRMVIPGGIDVHTRFQMPEQGMTSADDFFQGTKAALAGGTTMIIDHVVPEPGTSLLTAFDQWREWADSKSCCDYSLHVDITEWHKGVQEEMEALVKDHGVNSFLVYMAFKDRFQLSDSQIYEVLSVIRDIGATAQVHAENGDIIAEEQQRILELGITGPEGHVLSRPEEVEAEAVNRAITIANQTNCPLYITKVMSKSAAEVIAQARKKGTVVYGEPITASLGTDGSHYWSKNWAKAAAFVTSPPLSPDPTTPDFLNSLLSCGDLQVTGSAHCTFNTAQKAVGKDNFTLIPEGTNGTEERMSIIWDKAVVTGKMDENQFVAVTSTNAAKIFNLYPRKGRIAVGSDADLVIWDPDSVKTISAKTHNISLEYNIFEGMECRGSPLVVISQGKIVLEDGNLHVTEGSGRYIPRKPFPDFVYKRIKARSRLAELRGVPRGLYDGPVCEVSVTPKTVTPASSAKTSPAKQQAPPVRNLHQSGFSLSGAQIDDNIPRRTTQRIVAPPGGRANITSLG</sequence>
<gene>
    <name type="primary">DPYSL2</name>
</gene>
<protein>
    <recommendedName>
        <fullName>Dihydropyrimidinase-related protein 2</fullName>
        <shortName>DRP-2</shortName>
    </recommendedName>
    <alternativeName>
        <fullName>Collapsin response mediator protein CRMP-62</fullName>
    </alternativeName>
</protein>
<dbReference type="EMBL" id="U17277">
    <property type="protein sequence ID" value="AAA93200.1"/>
    <property type="molecule type" value="mRNA"/>
</dbReference>
<dbReference type="PIR" id="S58889">
    <property type="entry name" value="S58889"/>
</dbReference>
<dbReference type="RefSeq" id="XP_015152784.1">
    <property type="nucleotide sequence ID" value="XM_015297298.4"/>
</dbReference>
<dbReference type="RefSeq" id="XP_046787530.1">
    <property type="nucleotide sequence ID" value="XM_046931574.1"/>
</dbReference>
<dbReference type="SMR" id="Q90635"/>
<dbReference type="FunCoup" id="Q90635">
    <property type="interactions" value="1928"/>
</dbReference>
<dbReference type="IntAct" id="Q90635">
    <property type="interactions" value="1"/>
</dbReference>
<dbReference type="STRING" id="9031.ENSGALP00000030864"/>
<dbReference type="MEROPS" id="M38.975"/>
<dbReference type="GlyGen" id="Q90635">
    <property type="glycosylation" value="1 site"/>
</dbReference>
<dbReference type="iPTMnet" id="Q90635"/>
<dbReference type="PaxDb" id="9031-ENSGALP00000030864"/>
<dbReference type="Ensembl" id="ENSGALT00010044177.1">
    <property type="protein sequence ID" value="ENSGALP00010026272.1"/>
    <property type="gene ID" value="ENSGALG00010018309.1"/>
</dbReference>
<dbReference type="GeneID" id="395155"/>
<dbReference type="CTD" id="1808"/>
<dbReference type="VEuPathDB" id="HostDB:geneid_395155"/>
<dbReference type="eggNOG" id="KOG2584">
    <property type="taxonomic scope" value="Eukaryota"/>
</dbReference>
<dbReference type="GeneTree" id="ENSGT01030000234527"/>
<dbReference type="HOGENOM" id="CLU_015572_2_2_1"/>
<dbReference type="InParanoid" id="Q90635"/>
<dbReference type="OrthoDB" id="10258955at2759"/>
<dbReference type="Reactome" id="R-GGA-399956">
    <property type="pathway name" value="CRMPs in Sema3A signaling"/>
</dbReference>
<dbReference type="PRO" id="PR:Q90635"/>
<dbReference type="Proteomes" id="UP000000539">
    <property type="component" value="Chromosome 22"/>
</dbReference>
<dbReference type="Bgee" id="ENSGALG00000000227">
    <property type="expression patterns" value="Expressed in cerebellum and 12 other cell types or tissues"/>
</dbReference>
<dbReference type="GO" id="GO:0005829">
    <property type="term" value="C:cytosol"/>
    <property type="evidence" value="ECO:0000318"/>
    <property type="project" value="GO_Central"/>
</dbReference>
<dbReference type="GO" id="GO:0016812">
    <property type="term" value="F:hydrolase activity, acting on carbon-nitrogen (but not peptide) bonds, in cyclic amides"/>
    <property type="evidence" value="ECO:0000318"/>
    <property type="project" value="GO_Central"/>
</dbReference>
<dbReference type="GO" id="GO:0030154">
    <property type="term" value="P:cell differentiation"/>
    <property type="evidence" value="ECO:0007669"/>
    <property type="project" value="UniProtKB-KW"/>
</dbReference>
<dbReference type="GO" id="GO:0007010">
    <property type="term" value="P:cytoskeleton organization"/>
    <property type="evidence" value="ECO:0000250"/>
    <property type="project" value="UniProtKB"/>
</dbReference>
<dbReference type="GO" id="GO:0007399">
    <property type="term" value="P:nervous system development"/>
    <property type="evidence" value="ECO:0007669"/>
    <property type="project" value="UniProtKB-KW"/>
</dbReference>
<dbReference type="CDD" id="cd01314">
    <property type="entry name" value="D-HYD"/>
    <property type="match status" value="1"/>
</dbReference>
<dbReference type="FunFam" id="2.30.40.10:FF:000021">
    <property type="entry name" value="Dihydropyrimidinase-related protein 2"/>
    <property type="match status" value="1"/>
</dbReference>
<dbReference type="FunFam" id="2.30.40.10:FF:000022">
    <property type="entry name" value="Dihydropyrimidinase-related protein 2"/>
    <property type="match status" value="1"/>
</dbReference>
<dbReference type="FunFam" id="3.20.20.140:FF:000174">
    <property type="entry name" value="Dihydropyrimidinase-related protein 2"/>
    <property type="match status" value="1"/>
</dbReference>
<dbReference type="Gene3D" id="3.20.20.140">
    <property type="entry name" value="Metal-dependent hydrolases"/>
    <property type="match status" value="1"/>
</dbReference>
<dbReference type="Gene3D" id="2.30.40.10">
    <property type="entry name" value="Urease, subunit C, domain 1"/>
    <property type="match status" value="1"/>
</dbReference>
<dbReference type="InterPro" id="IPR006680">
    <property type="entry name" value="Amidohydro-rel"/>
</dbReference>
<dbReference type="InterPro" id="IPR011778">
    <property type="entry name" value="Hydantoinase/dihydroPyrase"/>
</dbReference>
<dbReference type="InterPro" id="IPR011059">
    <property type="entry name" value="Metal-dep_hydrolase_composite"/>
</dbReference>
<dbReference type="InterPro" id="IPR032466">
    <property type="entry name" value="Metal_Hydrolase"/>
</dbReference>
<dbReference type="InterPro" id="IPR050378">
    <property type="entry name" value="Metallo-dep_Hydrolases_sf"/>
</dbReference>
<dbReference type="NCBIfam" id="TIGR02033">
    <property type="entry name" value="D-hydantoinase"/>
    <property type="match status" value="1"/>
</dbReference>
<dbReference type="PANTHER" id="PTHR11647:SF56">
    <property type="entry name" value="DIHYDROPYRIMIDINASE-RELATED PROTEIN 2"/>
    <property type="match status" value="1"/>
</dbReference>
<dbReference type="PANTHER" id="PTHR11647">
    <property type="entry name" value="HYDRANTOINASE/DIHYDROPYRIMIDINASE FAMILY MEMBER"/>
    <property type="match status" value="1"/>
</dbReference>
<dbReference type="Pfam" id="PF01979">
    <property type="entry name" value="Amidohydro_1"/>
    <property type="match status" value="1"/>
</dbReference>
<dbReference type="SUPFAM" id="SSF51338">
    <property type="entry name" value="Composite domain of metallo-dependent hydrolases"/>
    <property type="match status" value="2"/>
</dbReference>
<dbReference type="SUPFAM" id="SSF51556">
    <property type="entry name" value="Metallo-dependent hydrolases"/>
    <property type="match status" value="1"/>
</dbReference>
<evidence type="ECO:0000250" key="1"/>
<evidence type="ECO:0000256" key="2">
    <source>
        <dbReference type="SAM" id="MobiDB-lite"/>
    </source>
</evidence>
<evidence type="ECO:0000269" key="3">
    <source>
    </source>
</evidence>
<evidence type="ECO:0000305" key="4"/>
<reference key="1">
    <citation type="journal article" date="1995" name="Nature">
        <title>Collapsin-induced growth cone collapse mediated by an intracellular protein related to UNC-33.</title>
        <authorList>
            <person name="Goshima Y."/>
            <person name="Nakamura F."/>
            <person name="Strittmatter P."/>
            <person name="Strittmatter S.M."/>
        </authorList>
    </citation>
    <scope>NUCLEOTIDE SEQUENCE [MRNA]</scope>
    <scope>FUNCTION</scope>
    <scope>SUBCELLULAR LOCATION</scope>
    <scope>TISSUE SPECIFICITY</scope>
    <source>
        <tissue>Spinal ganglion</tissue>
    </source>
</reference>
<name>DPYL2_CHICK</name>
<proteinExistence type="evidence at transcript level"/>
<accession>Q90635</accession>
<feature type="chain" id="PRO_0000165916" description="Dihydropyrimidinase-related protein 2">
    <location>
        <begin position="1"/>
        <end position="572"/>
    </location>
</feature>
<feature type="region of interest" description="Disordered" evidence="2">
    <location>
        <begin position="512"/>
        <end position="537"/>
    </location>
</feature>
<feature type="compositionally biased region" description="Polar residues" evidence="2">
    <location>
        <begin position="512"/>
        <end position="525"/>
    </location>
</feature>
<feature type="modified residue" description="Phosphothreonine" evidence="1">
    <location>
        <position position="509"/>
    </location>
</feature>
<feature type="modified residue" description="Phosphoserine" evidence="1">
    <location>
        <position position="518"/>
    </location>
</feature>
<feature type="modified residue" description="Phosphoserine" evidence="1">
    <location>
        <position position="522"/>
    </location>
</feature>
<organism>
    <name type="scientific">Gallus gallus</name>
    <name type="common">Chicken</name>
    <dbReference type="NCBI Taxonomy" id="9031"/>
    <lineage>
        <taxon>Eukaryota</taxon>
        <taxon>Metazoa</taxon>
        <taxon>Chordata</taxon>
        <taxon>Craniata</taxon>
        <taxon>Vertebrata</taxon>
        <taxon>Euteleostomi</taxon>
        <taxon>Archelosauria</taxon>
        <taxon>Archosauria</taxon>
        <taxon>Dinosauria</taxon>
        <taxon>Saurischia</taxon>
        <taxon>Theropoda</taxon>
        <taxon>Coelurosauria</taxon>
        <taxon>Aves</taxon>
        <taxon>Neognathae</taxon>
        <taxon>Galloanserae</taxon>
        <taxon>Galliformes</taxon>
        <taxon>Phasianidae</taxon>
        <taxon>Phasianinae</taxon>
        <taxon>Gallus</taxon>
    </lineage>
</organism>
<keyword id="KW-0963">Cytoplasm</keyword>
<keyword id="KW-0217">Developmental protein</keyword>
<keyword id="KW-0221">Differentiation</keyword>
<keyword id="KW-0524">Neurogenesis</keyword>
<keyword id="KW-0597">Phosphoprotein</keyword>
<keyword id="KW-1185">Reference proteome</keyword>